<organism>
    <name type="scientific">Arabidopsis thaliana</name>
    <name type="common">Mouse-ear cress</name>
    <dbReference type="NCBI Taxonomy" id="3702"/>
    <lineage>
        <taxon>Eukaryota</taxon>
        <taxon>Viridiplantae</taxon>
        <taxon>Streptophyta</taxon>
        <taxon>Embryophyta</taxon>
        <taxon>Tracheophyta</taxon>
        <taxon>Spermatophyta</taxon>
        <taxon>Magnoliopsida</taxon>
        <taxon>eudicotyledons</taxon>
        <taxon>Gunneridae</taxon>
        <taxon>Pentapetalae</taxon>
        <taxon>rosids</taxon>
        <taxon>malvids</taxon>
        <taxon>Brassicales</taxon>
        <taxon>Brassicaceae</taxon>
        <taxon>Camelineae</taxon>
        <taxon>Arabidopsis</taxon>
    </lineage>
</organism>
<evidence type="ECO:0000255" key="1"/>
<evidence type="ECO:0000255" key="2">
    <source>
        <dbReference type="PROSITE-ProRule" id="PRU00035"/>
    </source>
</evidence>
<evidence type="ECO:0000255" key="3">
    <source>
        <dbReference type="PROSITE-ProRule" id="PRU00857"/>
    </source>
</evidence>
<evidence type="ECO:0000256" key="4">
    <source>
        <dbReference type="SAM" id="MobiDB-lite"/>
    </source>
</evidence>
<evidence type="ECO:0000269" key="5">
    <source>
    </source>
</evidence>
<evidence type="ECO:0000303" key="6">
    <source ref="3"/>
</evidence>
<evidence type="ECO:0000303" key="7">
    <source ref="4"/>
</evidence>
<evidence type="ECO:0000305" key="8"/>
<gene>
    <name type="primary">GTE10</name>
    <name type="synonym">NPX1</name>
    <name type="ordered locus">At5g63320/At5g63330</name>
    <name type="ORF">K9H21.2/K9H21.3</name>
</gene>
<proteinExistence type="evidence at protein level"/>
<comment type="function">
    <text evidence="5">Acts as a negative regulator in plant response to changes in environmental conditions through the control of ABA-regulated gene expression.</text>
</comment>
<comment type="subunit">
    <text evidence="5">Interacts with TIP/NAC091.</text>
</comment>
<comment type="subcellular location">
    <subcellularLocation>
        <location evidence="5">Nucleus</location>
    </subcellularLocation>
</comment>
<comment type="alternative products">
    <event type="alternative splicing"/>
    <isoform>
        <id>Q9FGW9-1</id>
        <name>1</name>
        <sequence type="displayed"/>
    </isoform>
    <isoform>
        <id>Q9FGW9-2</id>
        <name>2</name>
        <sequence type="described" ref="VSP_040813 VSP_040814"/>
    </isoform>
</comment>
<comment type="tissue specificity">
    <text evidence="5">Widely expressed in all tissues.</text>
</comment>
<comment type="induction">
    <text evidence="5">Up-regulated by potassium deprivation, by salt stress, cold and treatment with exogenous abscisic acid (ABA).</text>
</comment>
<comment type="miscellaneous">
    <molecule>Isoform 2</molecule>
    <text evidence="8">May be due to intron retention.</text>
</comment>
<comment type="sequence caution" evidence="8">
    <conflict type="erroneous gene model prediction">
        <sequence resource="EMBL-CDS" id="BAB10736"/>
    </conflict>
    <text>Was originally thought to correspond to two different genes At5g63320 and At5g63330.</text>
</comment>
<comment type="sequence caution" evidence="8">
    <conflict type="erroneous gene model prediction">
        <sequence resource="EMBL-CDS" id="BAB10737"/>
    </conflict>
    <text>Was originally thought to correspond to two different genes At5g63320 and At5g63330.</text>
</comment>
<sequence length="1061" mass="118973">MGKARKHSRGRPSGFVPDYMQAVEPDEFVYSERMNSEASPPLKRRRFGLNGDNNGVSKEVLSLSKMSRSERKNLVHKLKMELQQVRDLSKKIASFSSDTVLLSPYNDHSCSDGPRRPPPENFATFVGSQGKKRPPVRSDKQRNKKGPSRLNVPTSYTVASVMKECETLLNRLWSHKSGWPFRTPVDPVMLNIPDYFNVIKHPMDLGTIRSRLCKGEYSSPLDFAADVRLTFSNSIAYNPPGNQFHTMAQGISKYFESGWKSIEKKIPMSKPPVIPLTSSASLESEIPFEVAPMRKKEAAMNDNKLRVEPAKLVMTDGEKKKLGQDLMALEEDFPQKIADLLREQSGSDGQSGEGEIEIDIEALSDEILFMVRKLLDDYLREKKKSMEKSEPCEMEIVHDSGFSNSPLQPSKGDLQIDEDVDIVGGNDPSVSSHPPLKIEKDAACRNNESSSSSSSSSESGSSSSDSDSCSSSGSETDSIKASKPTSREEKKQPGVGIDKKEDDSNSEKIVVNDSLNELDQLEHTVGEKSTTMDAVVLVPDEETAPPERQISPDSPDKRYRAAFLKNRFADTIMKAREKAFTKGEKGDPEKLRIEREEFEKRLREEKERLQAEAKAAEEARRKAKAEAAEKARREREQEREAARQALQKMEKTVEINEGIRFMEDLQMLRATGTEGDQLPTSMEVMSPKFSEDMLGLGSFKMESNSNPLEHLGLYMKMDEDEDEEEDPPHFSQRKVEDNPFDRSEKQEHSPHRVEGEDQLVSGNEEPVSQEAHDNGDQEDGKPINPNEIERQLENMPEQESGVGDKEEQETEVVDMRKQENEVVDMGVEEVHPLDRSEGRTLSPHRKEREDPRASGNEESVSEKAQDYENQRDEKINQSEREEQLENVLEQESSRDDDTGEQETEVVGVGKELSLDKSEGQTLSPHREEGENQLDCGNEELVSQKTQDNGNQEDEKSINKIEGEEQLANVPEQESRVTEKEEQETGVVDLGEQKSEVVEKGVEENEAVDNGEGVQGTEVSDKGGNETVVDGNGKVETEVVDKAGQKTDLVDQGEEDIDVEID</sequence>
<name>GTE10_ARATH</name>
<accession>Q9FGW9</accession>
<accession>Q9FGX0</accession>
<reference key="1">
    <citation type="journal article" date="2000" name="DNA Res.">
        <title>Structural analysis of Arabidopsis thaliana chromosome 5. X. Sequence features of the regions of 3,076,755 bp covered by sixty P1 and TAC clones.</title>
        <authorList>
            <person name="Sato S."/>
            <person name="Nakamura Y."/>
            <person name="Kaneko T."/>
            <person name="Katoh T."/>
            <person name="Asamizu E."/>
            <person name="Kotani H."/>
            <person name="Tabata S."/>
        </authorList>
    </citation>
    <scope>NUCLEOTIDE SEQUENCE [LARGE SCALE GENOMIC DNA]</scope>
    <source>
        <strain>cv. Columbia</strain>
    </source>
</reference>
<reference key="2">
    <citation type="journal article" date="2017" name="Plant J.">
        <title>Araport11: a complete reannotation of the Arabidopsis thaliana reference genome.</title>
        <authorList>
            <person name="Cheng C.Y."/>
            <person name="Krishnakumar V."/>
            <person name="Chan A.P."/>
            <person name="Thibaud-Nissen F."/>
            <person name="Schobel S."/>
            <person name="Town C.D."/>
        </authorList>
    </citation>
    <scope>GENOME REANNOTATION</scope>
    <source>
        <strain>cv. Columbia</strain>
    </source>
</reference>
<reference key="3">
    <citation type="submission" date="2004-07" db="EMBL/GenBank/DDBJ databases">
        <title>Arabidopsis ORF clones.</title>
        <authorList>
            <person name="Cheuk R.F."/>
            <person name="Chen H."/>
            <person name="Kim C.J."/>
            <person name="Shinn P."/>
            <person name="Ecker J.R."/>
        </authorList>
    </citation>
    <scope>NUCLEOTIDE SEQUENCE [LARGE SCALE MRNA] (ISOFORM 2)</scope>
    <source>
        <strain>cv. Columbia</strain>
    </source>
</reference>
<reference key="4">
    <citation type="submission" date="2005-03" db="EMBL/GenBank/DDBJ databases">
        <title>Arabidopsis ORF clones.</title>
        <authorList>
            <person name="Kim C.J."/>
            <person name="Chen H."/>
            <person name="Cheuk R.F."/>
            <person name="Shinn P."/>
            <person name="Ecker J.R."/>
        </authorList>
    </citation>
    <scope>NUCLEOTIDE SEQUENCE [LARGE SCALE MRNA] (ISOFORM 2)</scope>
    <source>
        <strain>cv. Columbia</strain>
    </source>
</reference>
<reference key="5">
    <citation type="journal article" date="2002" name="Nucleic Acids Res.">
        <title>Analysis of histone acetyltransferase and histone deacetylase families of Arabidopsis thaliana suggests functional diversification of chromatin modification among multicellular eukaryotes.</title>
        <authorList>
            <person name="Pandey R."/>
            <person name="Mueller A."/>
            <person name="Napoli C.A."/>
            <person name="Selinger D.A."/>
            <person name="Pikaard C.S."/>
            <person name="Richards E.J."/>
            <person name="Bender J."/>
            <person name="Mount D.W."/>
            <person name="Jorgensen R.A."/>
        </authorList>
    </citation>
    <scope>GENE FAMILY</scope>
    <scope>NOMENCLATURE</scope>
</reference>
<reference key="6">
    <citation type="journal article" date="2009" name="Plant Physiol.">
        <title>A nuclear factor regulates abscisic acid responses in Arabidopsis.</title>
        <authorList>
            <person name="Kim M.J."/>
            <person name="Shin R."/>
            <person name="Schachtman D.P."/>
        </authorList>
    </citation>
    <scope>FUNCTION</scope>
    <scope>INDUCTION</scope>
    <scope>TISSUE SPECIFICITY</scope>
    <scope>SUBCELLULAR LOCATION</scope>
    <scope>INTERACTION WITH TIP/NAC091</scope>
</reference>
<keyword id="KW-0938">Abscisic acid signaling pathway</keyword>
<keyword id="KW-0025">Alternative splicing</keyword>
<keyword id="KW-0103">Bromodomain</keyword>
<keyword id="KW-0175">Coiled coil</keyword>
<keyword id="KW-0539">Nucleus</keyword>
<keyword id="KW-1185">Reference proteome</keyword>
<keyword id="KW-0678">Repressor</keyword>
<keyword id="KW-0804">Transcription</keyword>
<keyword id="KW-0805">Transcription regulation</keyword>
<feature type="chain" id="PRO_0000406341" description="Transcription factor GTE10">
    <location>
        <begin position="1"/>
        <end position="1061"/>
    </location>
</feature>
<feature type="domain" description="Bromo" evidence="2">
    <location>
        <begin position="156"/>
        <end position="262"/>
    </location>
</feature>
<feature type="domain" description="NET" evidence="3">
    <location>
        <begin position="304"/>
        <end position="386"/>
    </location>
</feature>
<feature type="region of interest" description="Disordered" evidence="4">
    <location>
        <begin position="32"/>
        <end position="56"/>
    </location>
</feature>
<feature type="region of interest" description="Disordered" evidence="4">
    <location>
        <begin position="106"/>
        <end position="152"/>
    </location>
</feature>
<feature type="region of interest" description="Disordered" evidence="4">
    <location>
        <begin position="443"/>
        <end position="518"/>
    </location>
</feature>
<feature type="region of interest" description="Disordered" evidence="4">
    <location>
        <begin position="538"/>
        <end position="558"/>
    </location>
</feature>
<feature type="region of interest" description="Disordered" evidence="4">
    <location>
        <begin position="606"/>
        <end position="645"/>
    </location>
</feature>
<feature type="region of interest" description="Disordered" evidence="4">
    <location>
        <begin position="710"/>
        <end position="1033"/>
    </location>
</feature>
<feature type="coiled-coil region" evidence="1">
    <location>
        <begin position="588"/>
        <end position="658"/>
    </location>
</feature>
<feature type="coiled-coil region" evidence="1">
    <location>
        <begin position="852"/>
        <end position="893"/>
    </location>
</feature>
<feature type="compositionally biased region" description="Basic and acidic residues" evidence="4">
    <location>
        <begin position="109"/>
        <end position="118"/>
    </location>
</feature>
<feature type="compositionally biased region" description="Low complexity" evidence="4">
    <location>
        <begin position="448"/>
        <end position="476"/>
    </location>
</feature>
<feature type="compositionally biased region" description="Basic and acidic residues" evidence="4">
    <location>
        <begin position="477"/>
        <end position="506"/>
    </location>
</feature>
<feature type="compositionally biased region" description="Basic and acidic residues" evidence="4">
    <location>
        <begin position="733"/>
        <end position="755"/>
    </location>
</feature>
<feature type="compositionally biased region" description="Basic and acidic residues" evidence="4">
    <location>
        <begin position="770"/>
        <end position="792"/>
    </location>
</feature>
<feature type="compositionally biased region" description="Basic and acidic residues" evidence="4">
    <location>
        <begin position="828"/>
        <end position="852"/>
    </location>
</feature>
<feature type="compositionally biased region" description="Basic and acidic residues" evidence="4">
    <location>
        <begin position="860"/>
        <end position="883"/>
    </location>
</feature>
<feature type="compositionally biased region" description="Basic and acidic residues" evidence="4">
    <location>
        <begin position="912"/>
        <end position="929"/>
    </location>
</feature>
<feature type="compositionally biased region" description="Polar residues" evidence="4">
    <location>
        <begin position="940"/>
        <end position="949"/>
    </location>
</feature>
<feature type="compositionally biased region" description="Basic and acidic residues" evidence="4">
    <location>
        <begin position="952"/>
        <end position="962"/>
    </location>
</feature>
<feature type="compositionally biased region" description="Basic and acidic residues" evidence="4">
    <location>
        <begin position="990"/>
        <end position="1002"/>
    </location>
</feature>
<feature type="splice variant" id="VSP_040813" description="In isoform 2." evidence="6 7">
    <original>DSDSCSSSGSETD</original>
    <variation>GSCLCEPSSISLE</variation>
    <location>
        <begin position="465"/>
        <end position="477"/>
    </location>
</feature>
<feature type="splice variant" id="VSP_040814" description="In isoform 2." evidence="6 7">
    <location>
        <begin position="478"/>
        <end position="1061"/>
    </location>
</feature>
<dbReference type="EMBL" id="AB023035">
    <property type="protein sequence ID" value="BAB10736.1"/>
    <property type="status" value="ALT_SEQ"/>
    <property type="molecule type" value="Genomic_DNA"/>
</dbReference>
<dbReference type="EMBL" id="AB023035">
    <property type="protein sequence ID" value="BAB10737.1"/>
    <property type="status" value="ALT_SEQ"/>
    <property type="molecule type" value="Genomic_DNA"/>
</dbReference>
<dbReference type="EMBL" id="CP002688">
    <property type="protein sequence ID" value="AED97732.1"/>
    <property type="molecule type" value="Genomic_DNA"/>
</dbReference>
<dbReference type="EMBL" id="CP002688">
    <property type="protein sequence ID" value="AED97733.1"/>
    <property type="molecule type" value="Genomic_DNA"/>
</dbReference>
<dbReference type="EMBL" id="CP002688">
    <property type="protein sequence ID" value="AED97734.1"/>
    <property type="molecule type" value="Genomic_DNA"/>
</dbReference>
<dbReference type="EMBL" id="BT015056">
    <property type="protein sequence ID" value="AAT71928.1"/>
    <property type="molecule type" value="mRNA"/>
</dbReference>
<dbReference type="EMBL" id="BT021130">
    <property type="protein sequence ID" value="AAX22265.1"/>
    <property type="molecule type" value="mRNA"/>
</dbReference>
<dbReference type="RefSeq" id="NP_001154792.1">
    <molecule id="Q9FGW9-2"/>
    <property type="nucleotide sequence ID" value="NM_001161320.2"/>
</dbReference>
<dbReference type="RefSeq" id="NP_001154793.1">
    <molecule id="Q9FGW9-2"/>
    <property type="nucleotide sequence ID" value="NM_001161321.1"/>
</dbReference>
<dbReference type="RefSeq" id="NP_201137.5">
    <molecule id="Q9FGW9-1"/>
    <property type="nucleotide sequence ID" value="NM_125727.6"/>
</dbReference>
<dbReference type="SMR" id="Q9FGW9"/>
<dbReference type="BioGRID" id="21695">
    <property type="interactions" value="1"/>
</dbReference>
<dbReference type="FunCoup" id="Q9FGW9">
    <property type="interactions" value="264"/>
</dbReference>
<dbReference type="STRING" id="3702.Q9FGW9"/>
<dbReference type="iPTMnet" id="Q9FGW9"/>
<dbReference type="PaxDb" id="3702-AT5G63320.1"/>
<dbReference type="ProteomicsDB" id="247196">
    <molecule id="Q9FGW9-1"/>
</dbReference>
<dbReference type="EnsemblPlants" id="AT5G63320.1">
    <molecule id="Q9FGW9-1"/>
    <property type="protein sequence ID" value="AT5G63320.1"/>
    <property type="gene ID" value="AT5G63320"/>
</dbReference>
<dbReference type="EnsemblPlants" id="AT5G63320.2">
    <molecule id="Q9FGW9-2"/>
    <property type="protein sequence ID" value="AT5G63320.2"/>
    <property type="gene ID" value="AT5G63320"/>
</dbReference>
<dbReference type="EnsemblPlants" id="AT5G63320.3">
    <molecule id="Q9FGW9-2"/>
    <property type="protein sequence ID" value="AT5G63320.3"/>
    <property type="gene ID" value="AT5G63320"/>
</dbReference>
<dbReference type="GeneID" id="836452"/>
<dbReference type="Gramene" id="AT5G63320.1">
    <molecule id="Q9FGW9-1"/>
    <property type="protein sequence ID" value="AT5G63320.1"/>
    <property type="gene ID" value="AT5G63320"/>
</dbReference>
<dbReference type="Gramene" id="AT5G63320.2">
    <molecule id="Q9FGW9-2"/>
    <property type="protein sequence ID" value="AT5G63320.2"/>
    <property type="gene ID" value="AT5G63320"/>
</dbReference>
<dbReference type="Gramene" id="AT5G63320.3">
    <molecule id="Q9FGW9-2"/>
    <property type="protein sequence ID" value="AT5G63320.3"/>
    <property type="gene ID" value="AT5G63320"/>
</dbReference>
<dbReference type="KEGG" id="ath:AT5G63320"/>
<dbReference type="Araport" id="AT5G63320"/>
<dbReference type="TAIR" id="AT5G63320">
    <property type="gene designation" value="NPX1"/>
</dbReference>
<dbReference type="eggNOG" id="KOG1474">
    <property type="taxonomic scope" value="Eukaryota"/>
</dbReference>
<dbReference type="HOGENOM" id="CLU_007920_0_0_1"/>
<dbReference type="InParanoid" id="Q9FGW9"/>
<dbReference type="OMA" id="KGSTHRN"/>
<dbReference type="OrthoDB" id="21449at2759"/>
<dbReference type="PhylomeDB" id="Q9FGW9"/>
<dbReference type="PRO" id="PR:Q9FGW9"/>
<dbReference type="Proteomes" id="UP000006548">
    <property type="component" value="Chromosome 5"/>
</dbReference>
<dbReference type="ExpressionAtlas" id="Q9FGW9">
    <property type="expression patterns" value="baseline and differential"/>
</dbReference>
<dbReference type="GO" id="GO:0005634">
    <property type="term" value="C:nucleus"/>
    <property type="evidence" value="ECO:0000314"/>
    <property type="project" value="TAIR"/>
</dbReference>
<dbReference type="GO" id="GO:0009738">
    <property type="term" value="P:abscisic acid-activated signaling pathway"/>
    <property type="evidence" value="ECO:0007669"/>
    <property type="project" value="UniProtKB-KW"/>
</dbReference>
<dbReference type="GO" id="GO:0051365">
    <property type="term" value="P:cellular response to potassium ion starvation"/>
    <property type="evidence" value="ECO:0000270"/>
    <property type="project" value="UniProtKB"/>
</dbReference>
<dbReference type="GO" id="GO:0045892">
    <property type="term" value="P:negative regulation of DNA-templated transcription"/>
    <property type="evidence" value="ECO:0000314"/>
    <property type="project" value="TAIR"/>
</dbReference>
<dbReference type="GO" id="GO:0009737">
    <property type="term" value="P:response to abscisic acid"/>
    <property type="evidence" value="ECO:0000270"/>
    <property type="project" value="TAIR"/>
</dbReference>
<dbReference type="GO" id="GO:0009409">
    <property type="term" value="P:response to cold"/>
    <property type="evidence" value="ECO:0000270"/>
    <property type="project" value="UniProtKB"/>
</dbReference>
<dbReference type="GO" id="GO:0009651">
    <property type="term" value="P:response to salt stress"/>
    <property type="evidence" value="ECO:0000270"/>
    <property type="project" value="UniProtKB"/>
</dbReference>
<dbReference type="CDD" id="cd05506">
    <property type="entry name" value="Bromo_plant1"/>
    <property type="match status" value="1"/>
</dbReference>
<dbReference type="FunFam" id="1.20.920.10:FF:000050">
    <property type="entry name" value="Transcription factor GTE4"/>
    <property type="match status" value="1"/>
</dbReference>
<dbReference type="Gene3D" id="1.20.1270.220">
    <property type="match status" value="1"/>
</dbReference>
<dbReference type="Gene3D" id="1.20.920.10">
    <property type="entry name" value="Bromodomain-like"/>
    <property type="match status" value="1"/>
</dbReference>
<dbReference type="InterPro" id="IPR001487">
    <property type="entry name" value="Bromodomain"/>
</dbReference>
<dbReference type="InterPro" id="IPR036427">
    <property type="entry name" value="Bromodomain-like_sf"/>
</dbReference>
<dbReference type="InterPro" id="IPR052442">
    <property type="entry name" value="Env_Response_Regulator"/>
</dbReference>
<dbReference type="InterPro" id="IPR037377">
    <property type="entry name" value="GTE_bromo"/>
</dbReference>
<dbReference type="InterPro" id="IPR027353">
    <property type="entry name" value="NET_dom"/>
</dbReference>
<dbReference type="InterPro" id="IPR038336">
    <property type="entry name" value="NET_sf"/>
</dbReference>
<dbReference type="PANTHER" id="PTHR46136:SF33">
    <property type="entry name" value="TRANSCRIPTION FACTOR GTE10"/>
    <property type="match status" value="1"/>
</dbReference>
<dbReference type="PANTHER" id="PTHR46136">
    <property type="entry name" value="TRANSCRIPTION FACTOR GTE8"/>
    <property type="match status" value="1"/>
</dbReference>
<dbReference type="Pfam" id="PF17035">
    <property type="entry name" value="BET"/>
    <property type="match status" value="1"/>
</dbReference>
<dbReference type="Pfam" id="PF00439">
    <property type="entry name" value="Bromodomain"/>
    <property type="match status" value="1"/>
</dbReference>
<dbReference type="PRINTS" id="PR00503">
    <property type="entry name" value="BROMODOMAIN"/>
</dbReference>
<dbReference type="SMART" id="SM00297">
    <property type="entry name" value="BROMO"/>
    <property type="match status" value="1"/>
</dbReference>
<dbReference type="SUPFAM" id="SSF47370">
    <property type="entry name" value="Bromodomain"/>
    <property type="match status" value="1"/>
</dbReference>
<dbReference type="PROSITE" id="PS50014">
    <property type="entry name" value="BROMODOMAIN_2"/>
    <property type="match status" value="1"/>
</dbReference>
<dbReference type="PROSITE" id="PS51525">
    <property type="entry name" value="NET"/>
    <property type="match status" value="1"/>
</dbReference>
<protein>
    <recommendedName>
        <fullName>Transcription factor GTE10</fullName>
    </recommendedName>
    <alternativeName>
        <fullName>Bromodomain-containing protein GTE10</fullName>
    </alternativeName>
    <alternativeName>
        <fullName>Nuclear protein X1</fullName>
    </alternativeName>
    <alternativeName>
        <fullName>Protein GLOBAL TRANSCRIPTION FACTOR GROUP E10</fullName>
    </alternativeName>
</protein>